<evidence type="ECO:0000250" key="1">
    <source>
        <dbReference type="UniProtKB" id="E0CYC6"/>
    </source>
</evidence>
<evidence type="ECO:0000255" key="2"/>
<evidence type="ECO:0000255" key="3">
    <source>
        <dbReference type="PROSITE-ProRule" id="PRU00532"/>
    </source>
</evidence>
<evidence type="ECO:0000269" key="4">
    <source>
    </source>
</evidence>
<evidence type="ECO:0000269" key="5">
    <source>
    </source>
</evidence>
<evidence type="ECO:0000269" key="6">
    <source>
    </source>
</evidence>
<evidence type="ECO:0000269" key="7">
    <source>
    </source>
</evidence>
<evidence type="ECO:0000269" key="8">
    <source>
    </source>
</evidence>
<evidence type="ECO:0000269" key="9">
    <source>
    </source>
</evidence>
<evidence type="ECO:0000269" key="10">
    <source>
    </source>
</evidence>
<evidence type="ECO:0000303" key="11">
    <source>
    </source>
</evidence>
<evidence type="ECO:0000303" key="12">
    <source>
    </source>
</evidence>
<evidence type="ECO:0000303" key="13">
    <source>
    </source>
</evidence>
<evidence type="ECO:0000305" key="14"/>
<evidence type="ECO:0000305" key="15">
    <source>
    </source>
</evidence>
<evidence type="ECO:0000312" key="16">
    <source>
        <dbReference type="EMBL" id="AAF22299.1"/>
    </source>
</evidence>
<evidence type="ECO:0000312" key="17">
    <source>
        <dbReference type="HGNC" id="HGNC:30235"/>
    </source>
</evidence>
<dbReference type="EC" id="2.3.1.-" evidence="7 8 9 10"/>
<dbReference type="EMBL" id="AF185571">
    <property type="protein sequence ID" value="AAF22299.1"/>
    <property type="molecule type" value="mRNA"/>
</dbReference>
<dbReference type="EMBL" id="AC092653">
    <property type="status" value="NOT_ANNOTATED_CDS"/>
    <property type="molecule type" value="Genomic_DNA"/>
</dbReference>
<dbReference type="RefSeq" id="NP_057431.2">
    <property type="nucleotide sequence ID" value="NM_016347.2"/>
</dbReference>
<dbReference type="SMR" id="Q9UHF3"/>
<dbReference type="BioGRID" id="119557">
    <property type="interactions" value="20"/>
</dbReference>
<dbReference type="FunCoup" id="Q9UHF3">
    <property type="interactions" value="43"/>
</dbReference>
<dbReference type="IntAct" id="Q9UHF3">
    <property type="interactions" value="20"/>
</dbReference>
<dbReference type="iPTMnet" id="Q9UHF3"/>
<dbReference type="PhosphoSitePlus" id="Q9UHF3"/>
<dbReference type="BioMuta" id="NAT8B"/>
<dbReference type="MassIVE" id="Q9UHF3"/>
<dbReference type="PeptideAtlas" id="Q9UHF3"/>
<dbReference type="ProteomicsDB" id="84340"/>
<dbReference type="DNASU" id="51471"/>
<dbReference type="AGR" id="HGNC:30235"/>
<dbReference type="DisGeNET" id="51471"/>
<dbReference type="GeneCards" id="NAT8B"/>
<dbReference type="HGNC" id="HGNC:30235">
    <property type="gene designation" value="NAT8B"/>
</dbReference>
<dbReference type="MIM" id="608190">
    <property type="type" value="gene"/>
</dbReference>
<dbReference type="neXtProt" id="NX_Q9UHF3"/>
<dbReference type="PharmGKB" id="PA162396978"/>
<dbReference type="InParanoid" id="Q9UHF3"/>
<dbReference type="OrthoDB" id="41532at2759"/>
<dbReference type="PAN-GO" id="Q9UHF3">
    <property type="GO annotations" value="1 GO annotation based on evolutionary models"/>
</dbReference>
<dbReference type="PhylomeDB" id="Q9UHF3"/>
<dbReference type="BRENDA" id="2.3.1.32">
    <property type="organism ID" value="2681"/>
</dbReference>
<dbReference type="PathwayCommons" id="Q9UHF3"/>
<dbReference type="Reactome" id="R-HSA-977225">
    <property type="pathway name" value="Amyloid fiber formation"/>
</dbReference>
<dbReference type="SignaLink" id="Q9UHF3"/>
<dbReference type="BioGRID-ORCS" id="51471">
    <property type="hits" value="9 hits in 243 CRISPR screens"/>
</dbReference>
<dbReference type="GenomeRNAi" id="51471"/>
<dbReference type="Pharos" id="Q9UHF3">
    <property type="development level" value="Tbio"/>
</dbReference>
<dbReference type="PRO" id="PR:Q9UHF3"/>
<dbReference type="Proteomes" id="UP000005640">
    <property type="component" value="Unplaced"/>
</dbReference>
<dbReference type="RNAct" id="Q9UHF3">
    <property type="molecule type" value="protein"/>
</dbReference>
<dbReference type="GO" id="GO:0005789">
    <property type="term" value="C:endoplasmic reticulum membrane"/>
    <property type="evidence" value="ECO:0000314"/>
    <property type="project" value="UniProtKB"/>
</dbReference>
<dbReference type="GO" id="GO:0005793">
    <property type="term" value="C:endoplasmic reticulum-Golgi intermediate compartment"/>
    <property type="evidence" value="ECO:0000314"/>
    <property type="project" value="UniProtKB"/>
</dbReference>
<dbReference type="GO" id="GO:0033116">
    <property type="term" value="C:endoplasmic reticulum-Golgi intermediate compartment membrane"/>
    <property type="evidence" value="ECO:0000314"/>
    <property type="project" value="UniProtKB"/>
</dbReference>
<dbReference type="GO" id="GO:0016020">
    <property type="term" value="C:membrane"/>
    <property type="evidence" value="ECO:0000303"/>
    <property type="project" value="UniProtKB"/>
</dbReference>
<dbReference type="GO" id="GO:0004468">
    <property type="term" value="F:L-lysine N-acetyltransferase activity, acting on acetyl phosphate as donor"/>
    <property type="evidence" value="ECO:0000304"/>
    <property type="project" value="Reactome"/>
</dbReference>
<dbReference type="GO" id="GO:0008080">
    <property type="term" value="F:N-acetyltransferase activity"/>
    <property type="evidence" value="ECO:0000318"/>
    <property type="project" value="GO_Central"/>
</dbReference>
<dbReference type="GO" id="GO:0061733">
    <property type="term" value="F:protein-lysine-acetyltransferase activity"/>
    <property type="evidence" value="ECO:0000314"/>
    <property type="project" value="UniProtKB"/>
</dbReference>
<dbReference type="GO" id="GO:1990000">
    <property type="term" value="P:amyloid fibril formation"/>
    <property type="evidence" value="ECO:0000304"/>
    <property type="project" value="Reactome"/>
</dbReference>
<dbReference type="GO" id="GO:0050435">
    <property type="term" value="P:amyloid-beta metabolic process"/>
    <property type="evidence" value="ECO:0000315"/>
    <property type="project" value="UniProtKB"/>
</dbReference>
<dbReference type="GO" id="GO:0001702">
    <property type="term" value="P:gastrulation with mouth forming second"/>
    <property type="evidence" value="ECO:0000303"/>
    <property type="project" value="UniProtKB"/>
</dbReference>
<dbReference type="GO" id="GO:0043066">
    <property type="term" value="P:negative regulation of apoptotic process"/>
    <property type="evidence" value="ECO:0000314"/>
    <property type="project" value="UniProtKB"/>
</dbReference>
<dbReference type="GO" id="GO:0018003">
    <property type="term" value="P:peptidyl-lysine N6-acetylation"/>
    <property type="evidence" value="ECO:0000314"/>
    <property type="project" value="UniProtKB"/>
</dbReference>
<dbReference type="GO" id="GO:0010628">
    <property type="term" value="P:positive regulation of gene expression"/>
    <property type="evidence" value="ECO:0000315"/>
    <property type="project" value="UniProtKB"/>
</dbReference>
<dbReference type="GO" id="GO:0016241">
    <property type="term" value="P:regulation of macroautophagy"/>
    <property type="evidence" value="ECO:0000250"/>
    <property type="project" value="UniProtKB"/>
</dbReference>
<dbReference type="GO" id="GO:0140500">
    <property type="term" value="P:regulation of reticulophagy"/>
    <property type="evidence" value="ECO:0000250"/>
    <property type="project" value="UniProtKB"/>
</dbReference>
<dbReference type="CDD" id="cd04301">
    <property type="entry name" value="NAT_SF"/>
    <property type="match status" value="1"/>
</dbReference>
<dbReference type="FunFam" id="3.40.630.30:FF:000118">
    <property type="entry name" value="N-acetyltransferase family 8 member 3"/>
    <property type="match status" value="1"/>
</dbReference>
<dbReference type="Gene3D" id="3.40.630.30">
    <property type="match status" value="1"/>
</dbReference>
<dbReference type="InterPro" id="IPR016181">
    <property type="entry name" value="Acyl_CoA_acyltransferase"/>
</dbReference>
<dbReference type="InterPro" id="IPR000182">
    <property type="entry name" value="GNAT_dom"/>
</dbReference>
<dbReference type="InterPro" id="IPR050769">
    <property type="entry name" value="NAT_camello-type"/>
</dbReference>
<dbReference type="PANTHER" id="PTHR13947">
    <property type="entry name" value="GNAT FAMILY N-ACETYLTRANSFERASE"/>
    <property type="match status" value="1"/>
</dbReference>
<dbReference type="PANTHER" id="PTHR13947:SF48">
    <property type="entry name" value="N-ACETYLTRANSFERASE 8-RELATED"/>
    <property type="match status" value="1"/>
</dbReference>
<dbReference type="Pfam" id="PF00583">
    <property type="entry name" value="Acetyltransf_1"/>
    <property type="match status" value="1"/>
</dbReference>
<dbReference type="SUPFAM" id="SSF55729">
    <property type="entry name" value="Acyl-CoA N-acyltransferases (Nat)"/>
    <property type="match status" value="1"/>
</dbReference>
<dbReference type="PROSITE" id="PS51186">
    <property type="entry name" value="GNAT"/>
    <property type="match status" value="1"/>
</dbReference>
<comment type="function">
    <text evidence="1 7 8 9 10">Endoplasmic reticulum (ER)-membrane-bound lysine N-acetyltransferase catalyzing the N6-acetylation of lysine residues in the lumen of the ER in various proteins, including PROM1 and BACE1, using acetyl-CoA as acetyl donor (PubMed:19011241, PubMed:22267734, PubMed:24556617, PubMed:31945187). Thereby, may regulate apoptosis through the acetylation and the regulation of the expression of PROM1 (PubMed:24556617). Acetylates and stabilizes BACE1 immature protein, leading to increased steady-state levels in neurons. By acting on BACE1 expression, may regulate amyloid beta-peptide formation (PubMed:19011241, PubMed:22267734). N(6)-lysine acetylation in ER maintains protein homeostasis and regulates reticulophagy (By similarity).</text>
</comment>
<comment type="catalytic activity">
    <reaction evidence="7 8 9 10">
        <text>L-lysyl-[protein] + acetyl-CoA = N(6)-acetyl-L-lysyl-[protein] + CoA + H(+)</text>
        <dbReference type="Rhea" id="RHEA:45948"/>
        <dbReference type="Rhea" id="RHEA-COMP:9752"/>
        <dbReference type="Rhea" id="RHEA-COMP:10731"/>
        <dbReference type="ChEBI" id="CHEBI:15378"/>
        <dbReference type="ChEBI" id="CHEBI:29969"/>
        <dbReference type="ChEBI" id="CHEBI:57287"/>
        <dbReference type="ChEBI" id="CHEBI:57288"/>
        <dbReference type="ChEBI" id="CHEBI:61930"/>
    </reaction>
    <physiologicalReaction direction="left-to-right" evidence="15">
        <dbReference type="Rhea" id="RHEA:45949"/>
    </physiologicalReaction>
</comment>
<comment type="activity regulation">
    <text evidence="10">Allosterically regulated by acetylation at residue Lys-99.</text>
</comment>
<comment type="subcellular location">
    <subcellularLocation>
        <location evidence="7 9">Endoplasmic reticulum-Golgi intermediate compartment membrane</location>
        <topology evidence="15">Single-pass type II membrane protein</topology>
    </subcellularLocation>
    <subcellularLocation>
        <location evidence="7">Endoplasmic reticulum membrane</location>
        <topology evidence="15">Single-pass type II membrane protein</topology>
    </subcellularLocation>
    <text evidence="7 9">Enriched in the endoplasmic reticulum-Golgi intermediate compartment (ERGIC).</text>
</comment>
<comment type="induction">
    <text evidence="7 8">Up-regulated by ceramides (PubMed:19011241). Up-regulated in the brain of Alzheimer's disease patients (PubMed:22267734).</text>
</comment>
<comment type="PTM">
    <text evidence="10">Acetylation on Lys-99 modulates enzymatic activity.</text>
</comment>
<comment type="polymorphism">
    <text evidence="4 7 9">The sequence shown in this entry differs from the translation of the reference genome assembly (GRCh38/hg38) due to two nonsense variants creating stop codons at positions 16 and 168 in the reference genome. Both nonsense variants would abolish catalytic activity. The sequence shown in this entry is that of the double variant p.[Ter16Ser;Ter168Gln]. The variant p.Ter16Ser may be extremely rare and is not reported in the Genome Aggregation Database (gnomAD v3.1.2). The variant p.Ter168Gln is common in the human population with a frequency of 75%. Although the existence of the double variant p.[Ter16Ser;Ter168Gln] has not been proven in normal tissues, several lines of evidence support its existence in certain tumors or cell lines. It has been cloned from a colon tumor and has also been detected at the mRNA level in H4 neuroglioma cell line, as well as in the neuroblastoma cell line SH-SY5Y (PubMed:11397015, PubMed:19011241). In H4 and SH-SY5Y cells, its mRNA level can be up-regulated by ceramides. In H4 cells, the silencing of NAT8B double variant often leads to cell death, suggesting a function in these cells (PubMed:19011241). Functional assays show that NAT8B possesses robust N-acetyltransferase activity in a similar, but not identical way to its paralog NAT8 (PubMed:19011241, PubMed:24556617).</text>
</comment>
<comment type="similarity">
    <text evidence="14">Belongs to the NAT8 family.</text>
</comment>
<comment type="caution">
    <text evidence="14">The sequence shown in this entry differs from the translation of the reference genome assembly (GRCh38/hg38) due to two nonsense variants creating stop codons at positions 16 and 168 in the reference genome.</text>
</comment>
<keyword id="KW-0007">Acetylation</keyword>
<keyword id="KW-0012">Acyltransferase</keyword>
<keyword id="KW-0256">Endoplasmic reticulum</keyword>
<keyword id="KW-0472">Membrane</keyword>
<keyword id="KW-1267">Proteomics identification</keyword>
<keyword id="KW-1185">Reference proteome</keyword>
<keyword id="KW-0735">Signal-anchor</keyword>
<keyword id="KW-0808">Transferase</keyword>
<keyword id="KW-0812">Transmembrane</keyword>
<keyword id="KW-1133">Transmembrane helix</keyword>
<organism>
    <name type="scientific">Homo sapiens</name>
    <name type="common">Human</name>
    <dbReference type="NCBI Taxonomy" id="9606"/>
    <lineage>
        <taxon>Eukaryota</taxon>
        <taxon>Metazoa</taxon>
        <taxon>Chordata</taxon>
        <taxon>Craniata</taxon>
        <taxon>Vertebrata</taxon>
        <taxon>Euteleostomi</taxon>
        <taxon>Mammalia</taxon>
        <taxon>Eutheria</taxon>
        <taxon>Euarchontoglires</taxon>
        <taxon>Primates</taxon>
        <taxon>Haplorrhini</taxon>
        <taxon>Catarrhini</taxon>
        <taxon>Hominidae</taxon>
        <taxon>Homo</taxon>
    </lineage>
</organism>
<name>NAT8B_HUMAN</name>
<sequence>MAPYHIRKYQESDRKSVVGLLSGGMAEHAPATFRRLLKLPRTLILLLGGALALLLVSGSWILALVFSLSLLPALWFLAKKPWTRYVDIALRTDMSDITKSYLSECGSCFWVAESEEKVVGTVGALPVDDPTLREKRLQLFHLSVDNEHRGQGIAKALVRTVLQFARDQGYSEVVLDTSNIQLSAMGLYQSLGFKKTGQSFFHVWARLVDLHTVHFIYHLPSAQAGRL</sequence>
<reference key="1">
    <citation type="journal article" date="2001" name="Dev. Biol.">
        <title>Overexpression of camello, a member of a novel protein family, reduces blastomere adhesion and inhibits gastrulation in Xenopus laevis.</title>
        <authorList>
            <person name="Popsueva A.E."/>
            <person name="Luchinskaya N.N."/>
            <person name="Ludwig A.V."/>
            <person name="Zinovjeva O.Y."/>
            <person name="Poteryaev D.A."/>
            <person name="Feigelman M.M."/>
            <person name="Ponomarev M.B."/>
            <person name="Berekelya L."/>
            <person name="Belyavsky A.V."/>
        </authorList>
    </citation>
    <scope>NUCLEOTIDE SEQUENCE [MRNA]</scope>
    <source>
        <tissue evidence="16">Colon tumor</tissue>
    </source>
</reference>
<reference key="2">
    <citation type="journal article" date="2005" name="Nature">
        <title>Generation and annotation of the DNA sequences of human chromosomes 2 and 4.</title>
        <authorList>
            <person name="Hillier L.W."/>
            <person name="Graves T.A."/>
            <person name="Fulton R.S."/>
            <person name="Fulton L.A."/>
            <person name="Pepin K.H."/>
            <person name="Minx P."/>
            <person name="Wagner-McPherson C."/>
            <person name="Layman D."/>
            <person name="Wylie K."/>
            <person name="Sekhon M."/>
            <person name="Becker M.C."/>
            <person name="Fewell G.A."/>
            <person name="Delehaunty K.D."/>
            <person name="Miner T.L."/>
            <person name="Nash W.E."/>
            <person name="Kremitzki C."/>
            <person name="Oddy L."/>
            <person name="Du H."/>
            <person name="Sun H."/>
            <person name="Bradshaw-Cordum H."/>
            <person name="Ali J."/>
            <person name="Carter J."/>
            <person name="Cordes M."/>
            <person name="Harris A."/>
            <person name="Isak A."/>
            <person name="van Brunt A."/>
            <person name="Nguyen C."/>
            <person name="Du F."/>
            <person name="Courtney L."/>
            <person name="Kalicki J."/>
            <person name="Ozersky P."/>
            <person name="Abbott S."/>
            <person name="Armstrong J."/>
            <person name="Belter E.A."/>
            <person name="Caruso L."/>
            <person name="Cedroni M."/>
            <person name="Cotton M."/>
            <person name="Davidson T."/>
            <person name="Desai A."/>
            <person name="Elliott G."/>
            <person name="Erb T."/>
            <person name="Fronick C."/>
            <person name="Gaige T."/>
            <person name="Haakenson W."/>
            <person name="Haglund K."/>
            <person name="Holmes A."/>
            <person name="Harkins R."/>
            <person name="Kim K."/>
            <person name="Kruchowski S.S."/>
            <person name="Strong C.M."/>
            <person name="Grewal N."/>
            <person name="Goyea E."/>
            <person name="Hou S."/>
            <person name="Levy A."/>
            <person name="Martinka S."/>
            <person name="Mead K."/>
            <person name="McLellan M.D."/>
            <person name="Meyer R."/>
            <person name="Randall-Maher J."/>
            <person name="Tomlinson C."/>
            <person name="Dauphin-Kohlberg S."/>
            <person name="Kozlowicz-Reilly A."/>
            <person name="Shah N."/>
            <person name="Swearengen-Shahid S."/>
            <person name="Snider J."/>
            <person name="Strong J.T."/>
            <person name="Thompson J."/>
            <person name="Yoakum M."/>
            <person name="Leonard S."/>
            <person name="Pearman C."/>
            <person name="Trani L."/>
            <person name="Radionenko M."/>
            <person name="Waligorski J.E."/>
            <person name="Wang C."/>
            <person name="Rock S.M."/>
            <person name="Tin-Wollam A.-M."/>
            <person name="Maupin R."/>
            <person name="Latreille P."/>
            <person name="Wendl M.C."/>
            <person name="Yang S.-P."/>
            <person name="Pohl C."/>
            <person name="Wallis J.W."/>
            <person name="Spieth J."/>
            <person name="Bieri T.A."/>
            <person name="Berkowicz N."/>
            <person name="Nelson J.O."/>
            <person name="Osborne J."/>
            <person name="Ding L."/>
            <person name="Meyer R."/>
            <person name="Sabo A."/>
            <person name="Shotland Y."/>
            <person name="Sinha P."/>
            <person name="Wohldmann P.E."/>
            <person name="Cook L.L."/>
            <person name="Hickenbotham M.T."/>
            <person name="Eldred J."/>
            <person name="Williams D."/>
            <person name="Jones T.A."/>
            <person name="She X."/>
            <person name="Ciccarelli F.D."/>
            <person name="Izaurralde E."/>
            <person name="Taylor J."/>
            <person name="Schmutz J."/>
            <person name="Myers R.M."/>
            <person name="Cox D.R."/>
            <person name="Huang X."/>
            <person name="McPherson J.D."/>
            <person name="Mardis E.R."/>
            <person name="Clifton S.W."/>
            <person name="Warren W.C."/>
            <person name="Chinwalla A.T."/>
            <person name="Eddy S.R."/>
            <person name="Marra M.A."/>
            <person name="Ovcharenko I."/>
            <person name="Furey T.S."/>
            <person name="Miller W."/>
            <person name="Eichler E.E."/>
            <person name="Bork P."/>
            <person name="Suyama M."/>
            <person name="Torrents D."/>
            <person name="Waterston R.H."/>
            <person name="Wilson R.K."/>
        </authorList>
    </citation>
    <scope>NUCLEOTIDE SEQUENCE [LARGE SCALE GENOMIC DNA]</scope>
    <scope>VARIANTS 16-SER--LEU-227 DEL AND 168-GLN--LEU-227 DEL</scope>
</reference>
<reference key="3">
    <citation type="journal article" date="2006" name="Hum. Genet.">
        <title>Human-specific nonsense mutations identified by genome sequence comparisons.</title>
        <authorList>
            <person name="Hahn Y."/>
            <person name="Lee B."/>
        </authorList>
    </citation>
    <scope>POLYMORPHISM</scope>
</reference>
<reference key="4">
    <citation type="journal article" date="2009" name="J. Biol. Chem.">
        <title>Two endoplasmic reticulum (ER)/ER Golgi intermediate compartment-based lysine acetyltransferases post-translationally regulate BACE1 levels.</title>
        <authorList>
            <person name="Ko M.H."/>
            <person name="Puglielli L."/>
        </authorList>
    </citation>
    <scope>FUNCTION</scope>
    <scope>CATALYTIC ACTIVITY</scope>
    <scope>SUBCELLULAR LOCATION</scope>
    <scope>INDUCTION BY CERAMIDES</scope>
    <scope>TOPOLOGY</scope>
</reference>
<reference key="5">
    <citation type="journal article" date="2012" name="J. Biol. Chem.">
        <title>Biochemical inhibition of the acetyltransferases ATase1 and ATase2 reduces beta-secretase (BACE1) levels and Abeta generation.</title>
        <authorList>
            <person name="Ding Y."/>
            <person name="Ko M.H."/>
            <person name="Pehar M."/>
            <person name="Kotch F."/>
            <person name="Peters N.R."/>
            <person name="Luo Y."/>
            <person name="Salamat S.M."/>
            <person name="Puglielli L."/>
        </authorList>
    </citation>
    <scope>FUNCTION</scope>
    <scope>CATALYTIC ACTIVITY</scope>
    <scope>INDUCTION</scope>
</reference>
<reference key="6">
    <citation type="journal article" date="2014" name="J. Mol. Biol.">
        <title>Post-translational regulation of CD133 by ATase1/ATase2-mediated lysine acetylation.</title>
        <authorList>
            <person name="Mak A.B."/>
            <person name="Pehar M."/>
            <person name="Nixon A.M."/>
            <person name="Williams R.A."/>
            <person name="Uetrecht A.C."/>
            <person name="Puglielli L."/>
            <person name="Moffat J."/>
        </authorList>
    </citation>
    <scope>FUNCTION</scope>
    <scope>CATALYTIC ACTIVITY</scope>
    <scope>SUBCELLULAR LOCATION</scope>
</reference>
<reference key="7">
    <citation type="journal article" date="2020" name="J. Neurochem.">
        <title>The endoplasmic reticulum acetyltransferases ATase1/NAT8B and ATase2/NAT8 are differentially regulated to adjust engagement of the secretory pathway.</title>
        <authorList>
            <person name="Rigby M.J."/>
            <person name="Ding Y."/>
            <person name="Farrugia M.A."/>
            <person name="Feig M."/>
            <person name="Cortese G.P."/>
            <person name="Mitchell H."/>
            <person name="Burger C."/>
            <person name="Puglielli L."/>
        </authorList>
    </citation>
    <scope>FUNCTION</scope>
    <scope>CATALYTIC ACTIVITY</scope>
    <scope>ACTIVITY REGULATION</scope>
    <scope>ACETYLATION AT LYS-99</scope>
    <scope>MUTAGENESIS OF LYS-99; ARG-149; SER-183 AND SER-190</scope>
</reference>
<gene>
    <name evidence="17" type="primary">NAT8B</name>
    <name evidence="11 16" type="synonym">CML2</name>
</gene>
<protein>
    <recommendedName>
        <fullName>N-acetyltransferase 8B</fullName>
        <ecNumber evidence="7 8 9 10">2.3.1.-</ecNumber>
    </recommendedName>
    <alternativeName>
        <fullName>Acetyltransferase 1</fullName>
        <shortName evidence="12 13">ATase1</shortName>
    </alternativeName>
    <alternativeName>
        <fullName>Camello-like protein 2</fullName>
    </alternativeName>
    <alternativeName>
        <fullName evidence="14">Protein-lysine N6-acetyltransferase 8B</fullName>
    </alternativeName>
</protein>
<feature type="chain" id="PRO_0000284685" description="N-acetyltransferase 8B">
    <location>
        <begin position="1"/>
        <end position="227"/>
    </location>
</feature>
<feature type="topological domain" description="Cytoplasmic" evidence="2 7">
    <location>
        <begin position="1"/>
        <end position="42"/>
    </location>
</feature>
<feature type="transmembrane region" description="Helical; Signal-anchor for type II membrane protein" evidence="15">
    <location>
        <begin position="43"/>
        <end position="63"/>
    </location>
</feature>
<feature type="topological domain" description="Lumenal" evidence="2 7">
    <location>
        <begin position="64"/>
        <end position="227"/>
    </location>
</feature>
<feature type="domain" description="N-acetyltransferase" evidence="3">
    <location>
        <begin position="61"/>
        <end position="214"/>
    </location>
</feature>
<feature type="modified residue" description="N6-acetyllysine" evidence="10">
    <location>
        <position position="99"/>
    </location>
</feature>
<feature type="sequence variant" id="VAR_088065" evidence="5 6">
    <location>
        <begin position="16"/>
        <end position="227"/>
    </location>
</feature>
<feature type="sequence variant" id="VAR_088066" description="In dbSNP:rs4852974." evidence="5 6">
    <location>
        <begin position="168"/>
        <end position="227"/>
    </location>
</feature>
<feature type="mutagenesis site" description="Diminishes protein-lysine N6-acetyltransferase activity." evidence="10">
    <original>K</original>
    <variation>E</variation>
    <variation>R</variation>
    <location>
        <position position="99"/>
    </location>
</feature>
<feature type="mutagenesis site" description="Exhibits reduced protein-lysine N6-acetyltransferase activity; when associated with A-183 and A-190." evidence="10">
    <original>R</original>
    <variation>A</variation>
    <location>
        <position position="149"/>
    </location>
</feature>
<feature type="mutagenesis site" description="Exhibits reduced protein-lysine N6-acetyltransferase activity; when associated with A-149 and A-190." evidence="10">
    <original>S</original>
    <variation>A</variation>
    <location>
        <position position="183"/>
    </location>
</feature>
<feature type="mutagenesis site" description="Exhibits reduced protein-lysine N6-acetyltransferase activity; when associated with A-149 and A-183." evidence="10">
    <original>S</original>
    <variation>A</variation>
    <location>
        <position position="190"/>
    </location>
</feature>
<proteinExistence type="evidence at protein level"/>
<accession>Q9UHF3</accession>
<accession>Q0VAD9</accession>
<accession>Q6NT18</accession>